<evidence type="ECO:0000255" key="1">
    <source>
        <dbReference type="HAMAP-Rule" id="MF_00440"/>
    </source>
</evidence>
<comment type="function">
    <text evidence="1">Negatively regulates transcription of bacterial ribonucleotide reductase nrd genes and operons by binding to NrdR-boxes.</text>
</comment>
<comment type="cofactor">
    <cofactor evidence="1">
        <name>Zn(2+)</name>
        <dbReference type="ChEBI" id="CHEBI:29105"/>
    </cofactor>
    <text evidence="1">Binds 1 zinc ion.</text>
</comment>
<comment type="similarity">
    <text evidence="1">Belongs to the NrdR family.</text>
</comment>
<organism>
    <name type="scientific">Streptococcus pyogenes serotype M5 (strain Manfredo)</name>
    <dbReference type="NCBI Taxonomy" id="160491"/>
    <lineage>
        <taxon>Bacteria</taxon>
        <taxon>Bacillati</taxon>
        <taxon>Bacillota</taxon>
        <taxon>Bacilli</taxon>
        <taxon>Lactobacillales</taxon>
        <taxon>Streptococcaceae</taxon>
        <taxon>Streptococcus</taxon>
    </lineage>
</organism>
<name>NRDR_STRPG</name>
<proteinExistence type="inferred from homology"/>
<keyword id="KW-0067">ATP-binding</keyword>
<keyword id="KW-0238">DNA-binding</keyword>
<keyword id="KW-0479">Metal-binding</keyword>
<keyword id="KW-0547">Nucleotide-binding</keyword>
<keyword id="KW-0678">Repressor</keyword>
<keyword id="KW-0804">Transcription</keyword>
<keyword id="KW-0805">Transcription regulation</keyword>
<keyword id="KW-0862">Zinc</keyword>
<keyword id="KW-0863">Zinc-finger</keyword>
<feature type="chain" id="PRO_1000080844" description="Transcriptional repressor NrdR">
    <location>
        <begin position="1"/>
        <end position="164"/>
    </location>
</feature>
<feature type="domain" description="ATP-cone" evidence="1">
    <location>
        <begin position="49"/>
        <end position="139"/>
    </location>
</feature>
<feature type="zinc finger region" evidence="1">
    <location>
        <begin position="3"/>
        <end position="34"/>
    </location>
</feature>
<accession>A2RGB3</accession>
<protein>
    <recommendedName>
        <fullName evidence="1">Transcriptional repressor NrdR</fullName>
    </recommendedName>
</protein>
<dbReference type="EMBL" id="AM295007">
    <property type="protein sequence ID" value="CAM30892.1"/>
    <property type="molecule type" value="Genomic_DNA"/>
</dbReference>
<dbReference type="RefSeq" id="WP_002985941.1">
    <property type="nucleotide sequence ID" value="NC_009332.1"/>
</dbReference>
<dbReference type="SMR" id="A2RGB3"/>
<dbReference type="GeneID" id="69901381"/>
<dbReference type="KEGG" id="spf:SpyM51571"/>
<dbReference type="HOGENOM" id="CLU_108412_0_0_9"/>
<dbReference type="GO" id="GO:0005524">
    <property type="term" value="F:ATP binding"/>
    <property type="evidence" value="ECO:0007669"/>
    <property type="project" value="UniProtKB-KW"/>
</dbReference>
<dbReference type="GO" id="GO:0003677">
    <property type="term" value="F:DNA binding"/>
    <property type="evidence" value="ECO:0007669"/>
    <property type="project" value="UniProtKB-KW"/>
</dbReference>
<dbReference type="GO" id="GO:0008270">
    <property type="term" value="F:zinc ion binding"/>
    <property type="evidence" value="ECO:0007669"/>
    <property type="project" value="UniProtKB-UniRule"/>
</dbReference>
<dbReference type="GO" id="GO:0045892">
    <property type="term" value="P:negative regulation of DNA-templated transcription"/>
    <property type="evidence" value="ECO:0007669"/>
    <property type="project" value="UniProtKB-UniRule"/>
</dbReference>
<dbReference type="HAMAP" id="MF_00440">
    <property type="entry name" value="NrdR"/>
    <property type="match status" value="1"/>
</dbReference>
<dbReference type="InterPro" id="IPR005144">
    <property type="entry name" value="ATP-cone_dom"/>
</dbReference>
<dbReference type="InterPro" id="IPR055173">
    <property type="entry name" value="NrdR-like_N"/>
</dbReference>
<dbReference type="InterPro" id="IPR003796">
    <property type="entry name" value="RNR_NrdR-like"/>
</dbReference>
<dbReference type="NCBIfam" id="TIGR00244">
    <property type="entry name" value="transcriptional regulator NrdR"/>
    <property type="match status" value="1"/>
</dbReference>
<dbReference type="PANTHER" id="PTHR30455">
    <property type="entry name" value="TRANSCRIPTIONAL REPRESSOR NRDR"/>
    <property type="match status" value="1"/>
</dbReference>
<dbReference type="PANTHER" id="PTHR30455:SF2">
    <property type="entry name" value="TRANSCRIPTIONAL REPRESSOR NRDR"/>
    <property type="match status" value="1"/>
</dbReference>
<dbReference type="Pfam" id="PF03477">
    <property type="entry name" value="ATP-cone"/>
    <property type="match status" value="1"/>
</dbReference>
<dbReference type="Pfam" id="PF22811">
    <property type="entry name" value="Zn_ribbon_NrdR"/>
    <property type="match status" value="1"/>
</dbReference>
<dbReference type="PROSITE" id="PS51161">
    <property type="entry name" value="ATP_CONE"/>
    <property type="match status" value="1"/>
</dbReference>
<reference key="1">
    <citation type="journal article" date="2007" name="J. Bacteriol.">
        <title>Complete genome of acute rheumatic fever-associated serotype M5 Streptococcus pyogenes strain Manfredo.</title>
        <authorList>
            <person name="Holden M.T.G."/>
            <person name="Scott A."/>
            <person name="Cherevach I."/>
            <person name="Chillingworth T."/>
            <person name="Churcher C."/>
            <person name="Cronin A."/>
            <person name="Dowd L."/>
            <person name="Feltwell T."/>
            <person name="Hamlin N."/>
            <person name="Holroyd S."/>
            <person name="Jagels K."/>
            <person name="Moule S."/>
            <person name="Mungall K."/>
            <person name="Quail M.A."/>
            <person name="Price C."/>
            <person name="Rabbinowitsch E."/>
            <person name="Sharp S."/>
            <person name="Skelton J."/>
            <person name="Whitehead S."/>
            <person name="Barrell B.G."/>
            <person name="Kehoe M."/>
            <person name="Parkhill J."/>
        </authorList>
    </citation>
    <scope>NUCLEOTIDE SEQUENCE [LARGE SCALE GENOMIC DNA]</scope>
    <source>
        <strain>Manfredo</strain>
    </source>
</reference>
<sequence length="164" mass="19131">MRCPKCNYHKSSVVDSRQAEDGNTIRRRRECEQCHTRFTTFERVEELPLLVIKKDGTREQFSRDKILNGVVQSAQKRPVSSTDIENVISRIEQEVRTTYENEVSSTAIGNLVMDELAELDEITYVRFASVYKSFKDVDEIEELLQQITNRVRGKKKRLNNDETN</sequence>
<gene>
    <name evidence="1" type="primary">nrdR</name>
    <name type="ordered locus">SpyM51571</name>
</gene>